<organism>
    <name type="scientific">Clostridium botulinum (strain Alaska E43 / Type E3)</name>
    <dbReference type="NCBI Taxonomy" id="508767"/>
    <lineage>
        <taxon>Bacteria</taxon>
        <taxon>Bacillati</taxon>
        <taxon>Bacillota</taxon>
        <taxon>Clostridia</taxon>
        <taxon>Eubacteriales</taxon>
        <taxon>Clostridiaceae</taxon>
        <taxon>Clostridium</taxon>
    </lineage>
</organism>
<evidence type="ECO:0000255" key="1">
    <source>
        <dbReference type="HAMAP-Rule" id="MF_00109"/>
    </source>
</evidence>
<protein>
    <recommendedName>
        <fullName evidence="1">Shikimate kinase</fullName>
        <shortName evidence="1">SK</shortName>
        <ecNumber evidence="1">2.7.1.71</ecNumber>
    </recommendedName>
</protein>
<name>AROK_CLOBA</name>
<feature type="chain" id="PRO_1000117456" description="Shikimate kinase">
    <location>
        <begin position="1"/>
        <end position="165"/>
    </location>
</feature>
<feature type="binding site" evidence="1">
    <location>
        <begin position="12"/>
        <end position="17"/>
    </location>
    <ligand>
        <name>ATP</name>
        <dbReference type="ChEBI" id="CHEBI:30616"/>
    </ligand>
</feature>
<feature type="binding site" evidence="1">
    <location>
        <position position="16"/>
    </location>
    <ligand>
        <name>Mg(2+)</name>
        <dbReference type="ChEBI" id="CHEBI:18420"/>
    </ligand>
</feature>
<feature type="binding site" evidence="1">
    <location>
        <position position="34"/>
    </location>
    <ligand>
        <name>substrate</name>
    </ligand>
</feature>
<feature type="binding site" evidence="1">
    <location>
        <position position="57"/>
    </location>
    <ligand>
        <name>substrate</name>
    </ligand>
</feature>
<feature type="binding site" evidence="1">
    <location>
        <position position="79"/>
    </location>
    <ligand>
        <name>substrate</name>
    </ligand>
</feature>
<feature type="binding site" evidence="1">
    <location>
        <position position="116"/>
    </location>
    <ligand>
        <name>ATP</name>
        <dbReference type="ChEBI" id="CHEBI:30616"/>
    </ligand>
</feature>
<feature type="binding site" evidence="1">
    <location>
        <position position="133"/>
    </location>
    <ligand>
        <name>substrate</name>
    </ligand>
</feature>
<dbReference type="EC" id="2.7.1.71" evidence="1"/>
<dbReference type="EMBL" id="CP001078">
    <property type="protein sequence ID" value="ACD51231.1"/>
    <property type="molecule type" value="Genomic_DNA"/>
</dbReference>
<dbReference type="RefSeq" id="WP_012449633.1">
    <property type="nucleotide sequence ID" value="NC_010723.1"/>
</dbReference>
<dbReference type="SMR" id="B2UYK3"/>
<dbReference type="KEGG" id="cbt:CLH_2888"/>
<dbReference type="HOGENOM" id="CLU_057607_4_0_9"/>
<dbReference type="UniPathway" id="UPA00053">
    <property type="reaction ID" value="UER00088"/>
</dbReference>
<dbReference type="GO" id="GO:0005829">
    <property type="term" value="C:cytosol"/>
    <property type="evidence" value="ECO:0007669"/>
    <property type="project" value="TreeGrafter"/>
</dbReference>
<dbReference type="GO" id="GO:0005524">
    <property type="term" value="F:ATP binding"/>
    <property type="evidence" value="ECO:0007669"/>
    <property type="project" value="UniProtKB-UniRule"/>
</dbReference>
<dbReference type="GO" id="GO:0000287">
    <property type="term" value="F:magnesium ion binding"/>
    <property type="evidence" value="ECO:0007669"/>
    <property type="project" value="UniProtKB-UniRule"/>
</dbReference>
<dbReference type="GO" id="GO:0004765">
    <property type="term" value="F:shikimate kinase activity"/>
    <property type="evidence" value="ECO:0007669"/>
    <property type="project" value="UniProtKB-UniRule"/>
</dbReference>
<dbReference type="GO" id="GO:0008652">
    <property type="term" value="P:amino acid biosynthetic process"/>
    <property type="evidence" value="ECO:0007669"/>
    <property type="project" value="UniProtKB-KW"/>
</dbReference>
<dbReference type="GO" id="GO:0009073">
    <property type="term" value="P:aromatic amino acid family biosynthetic process"/>
    <property type="evidence" value="ECO:0007669"/>
    <property type="project" value="UniProtKB-KW"/>
</dbReference>
<dbReference type="GO" id="GO:0009423">
    <property type="term" value="P:chorismate biosynthetic process"/>
    <property type="evidence" value="ECO:0007669"/>
    <property type="project" value="UniProtKB-UniRule"/>
</dbReference>
<dbReference type="CDD" id="cd00464">
    <property type="entry name" value="SK"/>
    <property type="match status" value="1"/>
</dbReference>
<dbReference type="Gene3D" id="3.40.50.300">
    <property type="entry name" value="P-loop containing nucleotide triphosphate hydrolases"/>
    <property type="match status" value="1"/>
</dbReference>
<dbReference type="HAMAP" id="MF_00109">
    <property type="entry name" value="Shikimate_kinase"/>
    <property type="match status" value="1"/>
</dbReference>
<dbReference type="InterPro" id="IPR027417">
    <property type="entry name" value="P-loop_NTPase"/>
</dbReference>
<dbReference type="InterPro" id="IPR031322">
    <property type="entry name" value="Shikimate/glucono_kinase"/>
</dbReference>
<dbReference type="InterPro" id="IPR000623">
    <property type="entry name" value="Shikimate_kinase/TSH1"/>
</dbReference>
<dbReference type="PANTHER" id="PTHR21087">
    <property type="entry name" value="SHIKIMATE KINASE"/>
    <property type="match status" value="1"/>
</dbReference>
<dbReference type="PANTHER" id="PTHR21087:SF16">
    <property type="entry name" value="SHIKIMATE KINASE 1, CHLOROPLASTIC"/>
    <property type="match status" value="1"/>
</dbReference>
<dbReference type="Pfam" id="PF01202">
    <property type="entry name" value="SKI"/>
    <property type="match status" value="1"/>
</dbReference>
<dbReference type="PRINTS" id="PR01100">
    <property type="entry name" value="SHIKIMTKNASE"/>
</dbReference>
<dbReference type="SUPFAM" id="SSF52540">
    <property type="entry name" value="P-loop containing nucleoside triphosphate hydrolases"/>
    <property type="match status" value="1"/>
</dbReference>
<gene>
    <name evidence="1" type="primary">aroK</name>
    <name type="ordered locus">CLH_2888</name>
</gene>
<comment type="function">
    <text evidence="1">Catalyzes the specific phosphorylation of the 3-hydroxyl group of shikimic acid using ATP as a cosubstrate.</text>
</comment>
<comment type="catalytic activity">
    <reaction evidence="1">
        <text>shikimate + ATP = 3-phosphoshikimate + ADP + H(+)</text>
        <dbReference type="Rhea" id="RHEA:13121"/>
        <dbReference type="ChEBI" id="CHEBI:15378"/>
        <dbReference type="ChEBI" id="CHEBI:30616"/>
        <dbReference type="ChEBI" id="CHEBI:36208"/>
        <dbReference type="ChEBI" id="CHEBI:145989"/>
        <dbReference type="ChEBI" id="CHEBI:456216"/>
        <dbReference type="EC" id="2.7.1.71"/>
    </reaction>
</comment>
<comment type="cofactor">
    <cofactor evidence="1">
        <name>Mg(2+)</name>
        <dbReference type="ChEBI" id="CHEBI:18420"/>
    </cofactor>
    <text evidence="1">Binds 1 Mg(2+) ion per subunit.</text>
</comment>
<comment type="pathway">
    <text evidence="1">Metabolic intermediate biosynthesis; chorismate biosynthesis; chorismate from D-erythrose 4-phosphate and phosphoenolpyruvate: step 5/7.</text>
</comment>
<comment type="subunit">
    <text evidence="1">Monomer.</text>
</comment>
<comment type="subcellular location">
    <subcellularLocation>
        <location evidence="1">Cytoplasm</location>
    </subcellularLocation>
</comment>
<comment type="similarity">
    <text evidence="1">Belongs to the shikimate kinase family.</text>
</comment>
<sequence length="165" mass="18756">MKNKVFLIGMPGCGKSTIGELISKELLLKFIDMDIYIEEKTSKTISELFEQGEDYFRDIESEACKEIIKYDNVVIATGGGVVKKGINVETLKNNGLVIFIDRPVEKIISDIDVSRRPLLKNGKERIIGLYKERYDIYNKACHKIVVNDGTIDEVIEEIKKIIINN</sequence>
<keyword id="KW-0028">Amino-acid biosynthesis</keyword>
<keyword id="KW-0057">Aromatic amino acid biosynthesis</keyword>
<keyword id="KW-0067">ATP-binding</keyword>
<keyword id="KW-0963">Cytoplasm</keyword>
<keyword id="KW-0418">Kinase</keyword>
<keyword id="KW-0460">Magnesium</keyword>
<keyword id="KW-0479">Metal-binding</keyword>
<keyword id="KW-0547">Nucleotide-binding</keyword>
<keyword id="KW-0808">Transferase</keyword>
<reference key="1">
    <citation type="submission" date="2008-05" db="EMBL/GenBank/DDBJ databases">
        <title>Complete genome sequence of Clostridium botulinum E3 str. Alaska E43.</title>
        <authorList>
            <person name="Brinkac L.M."/>
            <person name="Brown J.L."/>
            <person name="Bruce D."/>
            <person name="Detter C."/>
            <person name="Munk C."/>
            <person name="Smith L.A."/>
            <person name="Smith T.J."/>
            <person name="Sutton G."/>
            <person name="Brettin T.S."/>
        </authorList>
    </citation>
    <scope>NUCLEOTIDE SEQUENCE [LARGE SCALE GENOMIC DNA]</scope>
    <source>
        <strain>Alaska E43 / Type E3</strain>
    </source>
</reference>
<proteinExistence type="inferred from homology"/>
<accession>B2UYK3</accession>